<sequence>MGQQVLKFSNEKMEKAVAAYSRELATVRAGRASASVLDKVQVDYYGAPTPVVQLANITVPEARLLVIQPYDKTSIGDIEKAILKADLGLNPSNDGTVIRIAFPALTEERRRDLVKVVKKYAEEAKVAVRNVRRDGNDDLKKLEKAGEITEDDLRGYTEDIQKETDKYIAKVDEIAKNKEKEIMEV</sequence>
<evidence type="ECO:0000255" key="1">
    <source>
        <dbReference type="HAMAP-Rule" id="MF_00040"/>
    </source>
</evidence>
<evidence type="ECO:0007829" key="2">
    <source>
        <dbReference type="PDB" id="4GFQ"/>
    </source>
</evidence>
<reference key="1">
    <citation type="journal article" date="2003" name="Nature">
        <title>The genome sequence of Bacillus anthracis Ames and comparison to closely related bacteria.</title>
        <authorList>
            <person name="Read T.D."/>
            <person name="Peterson S.N."/>
            <person name="Tourasse N.J."/>
            <person name="Baillie L.W."/>
            <person name="Paulsen I.T."/>
            <person name="Nelson K.E."/>
            <person name="Tettelin H."/>
            <person name="Fouts D.E."/>
            <person name="Eisen J.A."/>
            <person name="Gill S.R."/>
            <person name="Holtzapple E.K."/>
            <person name="Okstad O.A."/>
            <person name="Helgason E."/>
            <person name="Rilstone J."/>
            <person name="Wu M."/>
            <person name="Kolonay J.F."/>
            <person name="Beanan M.J."/>
            <person name="Dodson R.J."/>
            <person name="Brinkac L.M."/>
            <person name="Gwinn M.L."/>
            <person name="DeBoy R.T."/>
            <person name="Madpu R."/>
            <person name="Daugherty S.C."/>
            <person name="Durkin A.S."/>
            <person name="Haft D.H."/>
            <person name="Nelson W.C."/>
            <person name="Peterson J.D."/>
            <person name="Pop M."/>
            <person name="Khouri H.M."/>
            <person name="Radune D."/>
            <person name="Benton J.L."/>
            <person name="Mahamoud Y."/>
            <person name="Jiang L."/>
            <person name="Hance I.R."/>
            <person name="Weidman J.F."/>
            <person name="Berry K.J."/>
            <person name="Plaut R.D."/>
            <person name="Wolf A.M."/>
            <person name="Watkins K.L."/>
            <person name="Nierman W.C."/>
            <person name="Hazen A."/>
            <person name="Cline R.T."/>
            <person name="Redmond C."/>
            <person name="Thwaite J.E."/>
            <person name="White O."/>
            <person name="Salzberg S.L."/>
            <person name="Thomason B."/>
            <person name="Friedlander A.M."/>
            <person name="Koehler T.M."/>
            <person name="Hanna P.C."/>
            <person name="Kolstoe A.-B."/>
            <person name="Fraser C.M."/>
        </authorList>
    </citation>
    <scope>NUCLEOTIDE SEQUENCE [LARGE SCALE GENOMIC DNA]</scope>
    <source>
        <strain>Ames / isolate Porton</strain>
    </source>
</reference>
<reference key="2">
    <citation type="journal article" date="2009" name="J. Bacteriol.">
        <title>The complete genome sequence of Bacillus anthracis Ames 'Ancestor'.</title>
        <authorList>
            <person name="Ravel J."/>
            <person name="Jiang L."/>
            <person name="Stanley S.T."/>
            <person name="Wilson M.R."/>
            <person name="Decker R.S."/>
            <person name="Read T.D."/>
            <person name="Worsham P."/>
            <person name="Keim P.S."/>
            <person name="Salzberg S.L."/>
            <person name="Fraser-Liggett C.M."/>
            <person name="Rasko D.A."/>
        </authorList>
    </citation>
    <scope>NUCLEOTIDE SEQUENCE [LARGE SCALE GENOMIC DNA]</scope>
    <source>
        <strain>Ames ancestor</strain>
    </source>
</reference>
<reference key="3">
    <citation type="submission" date="2004-01" db="EMBL/GenBank/DDBJ databases">
        <title>Complete genome sequence of Bacillus anthracis Sterne.</title>
        <authorList>
            <person name="Brettin T.S."/>
            <person name="Bruce D."/>
            <person name="Challacombe J.F."/>
            <person name="Gilna P."/>
            <person name="Han C."/>
            <person name="Hill K."/>
            <person name="Hitchcock P."/>
            <person name="Jackson P."/>
            <person name="Keim P."/>
            <person name="Longmire J."/>
            <person name="Lucas S."/>
            <person name="Okinaka R."/>
            <person name="Richardson P."/>
            <person name="Rubin E."/>
            <person name="Tice H."/>
        </authorList>
    </citation>
    <scope>NUCLEOTIDE SEQUENCE [LARGE SCALE GENOMIC DNA]</scope>
    <source>
        <strain>Sterne</strain>
    </source>
</reference>
<dbReference type="EMBL" id="AE016879">
    <property type="protein sequence ID" value="AAP27691.1"/>
    <property type="molecule type" value="Genomic_DNA"/>
</dbReference>
<dbReference type="EMBL" id="AE017334">
    <property type="protein sequence ID" value="AAT33076.1"/>
    <property type="molecule type" value="Genomic_DNA"/>
</dbReference>
<dbReference type="EMBL" id="AE017225">
    <property type="protein sequence ID" value="AAT55977.1"/>
    <property type="molecule type" value="Genomic_DNA"/>
</dbReference>
<dbReference type="RefSeq" id="NP_846205.1">
    <property type="nucleotide sequence ID" value="NC_003997.3"/>
</dbReference>
<dbReference type="RefSeq" id="WP_000531498.1">
    <property type="nucleotide sequence ID" value="NZ_WXXJ01000026.1"/>
</dbReference>
<dbReference type="RefSeq" id="YP_029926.1">
    <property type="nucleotide sequence ID" value="NC_005945.1"/>
</dbReference>
<dbReference type="PDB" id="4GFQ">
    <property type="method" value="X-ray"/>
    <property type="resolution" value="2.65 A"/>
    <property type="chains" value="A=1-185"/>
</dbReference>
<dbReference type="PDBsum" id="4GFQ"/>
<dbReference type="SMR" id="Q81WL1"/>
<dbReference type="STRING" id="261594.GBAA_3962"/>
<dbReference type="DNASU" id="1086824"/>
<dbReference type="GeneID" id="45023652"/>
<dbReference type="KEGG" id="ban:BA_3962"/>
<dbReference type="KEGG" id="bar:GBAA_3962"/>
<dbReference type="KEGG" id="bat:BAS3675"/>
<dbReference type="PATRIC" id="fig|198094.11.peg.3932"/>
<dbReference type="eggNOG" id="COG0233">
    <property type="taxonomic scope" value="Bacteria"/>
</dbReference>
<dbReference type="HOGENOM" id="CLU_073981_2_0_9"/>
<dbReference type="OMA" id="FNPMNNG"/>
<dbReference type="OrthoDB" id="9804006at2"/>
<dbReference type="EvolutionaryTrace" id="Q81WL1"/>
<dbReference type="Proteomes" id="UP000000427">
    <property type="component" value="Chromosome"/>
</dbReference>
<dbReference type="Proteomes" id="UP000000594">
    <property type="component" value="Chromosome"/>
</dbReference>
<dbReference type="GO" id="GO:0005737">
    <property type="term" value="C:cytoplasm"/>
    <property type="evidence" value="ECO:0007669"/>
    <property type="project" value="UniProtKB-SubCell"/>
</dbReference>
<dbReference type="GO" id="GO:0043023">
    <property type="term" value="F:ribosomal large subunit binding"/>
    <property type="evidence" value="ECO:0007669"/>
    <property type="project" value="TreeGrafter"/>
</dbReference>
<dbReference type="GO" id="GO:0006415">
    <property type="term" value="P:translational termination"/>
    <property type="evidence" value="ECO:0007669"/>
    <property type="project" value="UniProtKB-UniRule"/>
</dbReference>
<dbReference type="CDD" id="cd00520">
    <property type="entry name" value="RRF"/>
    <property type="match status" value="1"/>
</dbReference>
<dbReference type="FunFam" id="1.10.132.20:FF:000001">
    <property type="entry name" value="Ribosome-recycling factor"/>
    <property type="match status" value="1"/>
</dbReference>
<dbReference type="FunFam" id="3.30.1360.40:FF:000001">
    <property type="entry name" value="Ribosome-recycling factor"/>
    <property type="match status" value="1"/>
</dbReference>
<dbReference type="Gene3D" id="3.30.1360.40">
    <property type="match status" value="1"/>
</dbReference>
<dbReference type="Gene3D" id="1.10.132.20">
    <property type="entry name" value="Ribosome-recycling factor"/>
    <property type="match status" value="1"/>
</dbReference>
<dbReference type="HAMAP" id="MF_00040">
    <property type="entry name" value="RRF"/>
    <property type="match status" value="1"/>
</dbReference>
<dbReference type="InterPro" id="IPR002661">
    <property type="entry name" value="Ribosome_recyc_fac"/>
</dbReference>
<dbReference type="InterPro" id="IPR023584">
    <property type="entry name" value="Ribosome_recyc_fac_dom"/>
</dbReference>
<dbReference type="InterPro" id="IPR036191">
    <property type="entry name" value="RRF_sf"/>
</dbReference>
<dbReference type="NCBIfam" id="TIGR00496">
    <property type="entry name" value="frr"/>
    <property type="match status" value="1"/>
</dbReference>
<dbReference type="PANTHER" id="PTHR20982:SF3">
    <property type="entry name" value="MITOCHONDRIAL RIBOSOME RECYCLING FACTOR PSEUDO 1"/>
    <property type="match status" value="1"/>
</dbReference>
<dbReference type="PANTHER" id="PTHR20982">
    <property type="entry name" value="RIBOSOME RECYCLING FACTOR"/>
    <property type="match status" value="1"/>
</dbReference>
<dbReference type="Pfam" id="PF01765">
    <property type="entry name" value="RRF"/>
    <property type="match status" value="1"/>
</dbReference>
<dbReference type="SUPFAM" id="SSF55194">
    <property type="entry name" value="Ribosome recycling factor, RRF"/>
    <property type="match status" value="1"/>
</dbReference>
<proteinExistence type="evidence at protein level"/>
<feature type="chain" id="PRO_0000167402" description="Ribosome-recycling factor">
    <location>
        <begin position="1"/>
        <end position="185"/>
    </location>
</feature>
<feature type="helix" evidence="2">
    <location>
        <begin position="1"/>
        <end position="25"/>
    </location>
</feature>
<feature type="strand" evidence="2">
    <location>
        <begin position="29"/>
        <end position="31"/>
    </location>
</feature>
<feature type="helix" evidence="2">
    <location>
        <begin position="34"/>
        <end position="37"/>
    </location>
</feature>
<feature type="strand" evidence="2">
    <location>
        <begin position="41"/>
        <end position="46"/>
    </location>
</feature>
<feature type="strand" evidence="2">
    <location>
        <begin position="48"/>
        <end position="50"/>
    </location>
</feature>
<feature type="helix" evidence="2">
    <location>
        <begin position="51"/>
        <end position="54"/>
    </location>
</feature>
<feature type="strand" evidence="2">
    <location>
        <begin position="55"/>
        <end position="61"/>
    </location>
</feature>
<feature type="strand" evidence="2">
    <location>
        <begin position="64"/>
        <end position="71"/>
    </location>
</feature>
<feature type="helix" evidence="2">
    <location>
        <begin position="72"/>
        <end position="74"/>
    </location>
</feature>
<feature type="helix" evidence="2">
    <location>
        <begin position="75"/>
        <end position="85"/>
    </location>
</feature>
<feature type="strand" evidence="2">
    <location>
        <begin position="98"/>
        <end position="101"/>
    </location>
</feature>
<feature type="helix" evidence="2">
    <location>
        <begin position="107"/>
        <end position="144"/>
    </location>
</feature>
<feature type="helix" evidence="2">
    <location>
        <begin position="150"/>
        <end position="183"/>
    </location>
</feature>
<organism>
    <name type="scientific">Bacillus anthracis</name>
    <dbReference type="NCBI Taxonomy" id="1392"/>
    <lineage>
        <taxon>Bacteria</taxon>
        <taxon>Bacillati</taxon>
        <taxon>Bacillota</taxon>
        <taxon>Bacilli</taxon>
        <taxon>Bacillales</taxon>
        <taxon>Bacillaceae</taxon>
        <taxon>Bacillus</taxon>
        <taxon>Bacillus cereus group</taxon>
    </lineage>
</organism>
<name>RRF_BACAN</name>
<protein>
    <recommendedName>
        <fullName evidence="1">Ribosome-recycling factor</fullName>
        <shortName evidence="1">RRF</shortName>
    </recommendedName>
    <alternativeName>
        <fullName evidence="1">Ribosome-releasing factor</fullName>
    </alternativeName>
</protein>
<gene>
    <name evidence="1" type="primary">frr</name>
    <name type="ordered locus">BA_3962</name>
    <name type="ordered locus">GBAA_3962</name>
    <name type="ordered locus">BAS3675</name>
</gene>
<comment type="function">
    <text evidence="1">Responsible for the release of ribosomes from messenger RNA at the termination of protein biosynthesis. May increase the efficiency of translation by recycling ribosomes from one round of translation to another.</text>
</comment>
<comment type="subcellular location">
    <subcellularLocation>
        <location evidence="1">Cytoplasm</location>
    </subcellularLocation>
</comment>
<comment type="similarity">
    <text evidence="1">Belongs to the RRF family.</text>
</comment>
<accession>Q81WL1</accession>
<accession>Q6HUR2</accession>
<accession>Q6KNZ3</accession>
<keyword id="KW-0002">3D-structure</keyword>
<keyword id="KW-0963">Cytoplasm</keyword>
<keyword id="KW-0648">Protein biosynthesis</keyword>
<keyword id="KW-1185">Reference proteome</keyword>